<protein>
    <recommendedName>
        <fullName evidence="1">Phosphomethylpyrimidine synthase</fullName>
        <ecNumber evidence="1">4.1.99.17</ecNumber>
    </recommendedName>
    <alternativeName>
        <fullName evidence="1">Hydroxymethylpyrimidine phosphate synthase</fullName>
        <shortName evidence="1">HMP-P synthase</shortName>
        <shortName evidence="1">HMP-phosphate synthase</shortName>
        <shortName evidence="1">HMPP synthase</shortName>
    </alternativeName>
    <alternativeName>
        <fullName evidence="1">Thiamine biosynthesis protein ThiC</fullName>
    </alternativeName>
</protein>
<keyword id="KW-0004">4Fe-4S</keyword>
<keyword id="KW-0408">Iron</keyword>
<keyword id="KW-0411">Iron-sulfur</keyword>
<keyword id="KW-0456">Lyase</keyword>
<keyword id="KW-0479">Metal-binding</keyword>
<keyword id="KW-0949">S-adenosyl-L-methionine</keyword>
<keyword id="KW-0784">Thiamine biosynthesis</keyword>
<keyword id="KW-0862">Zinc</keyword>
<gene>
    <name evidence="1" type="primary">thiC</name>
    <name type="ordered locus">SeD_A4570</name>
</gene>
<feature type="chain" id="PRO_1000093228" description="Phosphomethylpyrimidine synthase">
    <location>
        <begin position="1"/>
        <end position="631"/>
    </location>
</feature>
<feature type="binding site" evidence="1">
    <location>
        <position position="239"/>
    </location>
    <ligand>
        <name>substrate</name>
    </ligand>
</feature>
<feature type="binding site" evidence="1">
    <location>
        <position position="268"/>
    </location>
    <ligand>
        <name>substrate</name>
    </ligand>
</feature>
<feature type="binding site" evidence="1">
    <location>
        <position position="297"/>
    </location>
    <ligand>
        <name>substrate</name>
    </ligand>
</feature>
<feature type="binding site" evidence="1">
    <location>
        <position position="333"/>
    </location>
    <ligand>
        <name>substrate</name>
    </ligand>
</feature>
<feature type="binding site" evidence="1">
    <location>
        <begin position="353"/>
        <end position="355"/>
    </location>
    <ligand>
        <name>substrate</name>
    </ligand>
</feature>
<feature type="binding site" evidence="1">
    <location>
        <begin position="394"/>
        <end position="397"/>
    </location>
    <ligand>
        <name>substrate</name>
    </ligand>
</feature>
<feature type="binding site" evidence="1">
    <location>
        <position position="433"/>
    </location>
    <ligand>
        <name>substrate</name>
    </ligand>
</feature>
<feature type="binding site" evidence="1">
    <location>
        <position position="437"/>
    </location>
    <ligand>
        <name>Zn(2+)</name>
        <dbReference type="ChEBI" id="CHEBI:29105"/>
    </ligand>
</feature>
<feature type="binding site" evidence="1">
    <location>
        <position position="460"/>
    </location>
    <ligand>
        <name>substrate</name>
    </ligand>
</feature>
<feature type="binding site" evidence="1">
    <location>
        <position position="501"/>
    </location>
    <ligand>
        <name>Zn(2+)</name>
        <dbReference type="ChEBI" id="CHEBI:29105"/>
    </ligand>
</feature>
<feature type="binding site" evidence="1">
    <location>
        <position position="581"/>
    </location>
    <ligand>
        <name>[4Fe-4S] cluster</name>
        <dbReference type="ChEBI" id="CHEBI:49883"/>
        <note>4Fe-4S-S-AdoMet</note>
    </ligand>
</feature>
<feature type="binding site" evidence="1">
    <location>
        <position position="584"/>
    </location>
    <ligand>
        <name>[4Fe-4S] cluster</name>
        <dbReference type="ChEBI" id="CHEBI:49883"/>
        <note>4Fe-4S-S-AdoMet</note>
    </ligand>
</feature>
<feature type="binding site" evidence="1">
    <location>
        <position position="589"/>
    </location>
    <ligand>
        <name>[4Fe-4S] cluster</name>
        <dbReference type="ChEBI" id="CHEBI:49883"/>
        <note>4Fe-4S-S-AdoMet</note>
    </ligand>
</feature>
<organism>
    <name type="scientific">Salmonella dublin (strain CT_02021853)</name>
    <dbReference type="NCBI Taxonomy" id="439851"/>
    <lineage>
        <taxon>Bacteria</taxon>
        <taxon>Pseudomonadati</taxon>
        <taxon>Pseudomonadota</taxon>
        <taxon>Gammaproteobacteria</taxon>
        <taxon>Enterobacterales</taxon>
        <taxon>Enterobacteriaceae</taxon>
        <taxon>Salmonella</taxon>
    </lineage>
</organism>
<proteinExistence type="inferred from homology"/>
<name>THIC_SALDC</name>
<dbReference type="EC" id="4.1.99.17" evidence="1"/>
<dbReference type="EMBL" id="CP001144">
    <property type="protein sequence ID" value="ACH75996.1"/>
    <property type="molecule type" value="Genomic_DNA"/>
</dbReference>
<dbReference type="RefSeq" id="WP_000108424.1">
    <property type="nucleotide sequence ID" value="NC_011205.1"/>
</dbReference>
<dbReference type="SMR" id="B5FQK9"/>
<dbReference type="KEGG" id="sed:SeD_A4570"/>
<dbReference type="HOGENOM" id="CLU_013181_2_1_6"/>
<dbReference type="UniPathway" id="UPA00060"/>
<dbReference type="Proteomes" id="UP000008322">
    <property type="component" value="Chromosome"/>
</dbReference>
<dbReference type="GO" id="GO:0005829">
    <property type="term" value="C:cytosol"/>
    <property type="evidence" value="ECO:0007669"/>
    <property type="project" value="TreeGrafter"/>
</dbReference>
<dbReference type="GO" id="GO:0051539">
    <property type="term" value="F:4 iron, 4 sulfur cluster binding"/>
    <property type="evidence" value="ECO:0007669"/>
    <property type="project" value="UniProtKB-KW"/>
</dbReference>
<dbReference type="GO" id="GO:0016830">
    <property type="term" value="F:carbon-carbon lyase activity"/>
    <property type="evidence" value="ECO:0007669"/>
    <property type="project" value="InterPro"/>
</dbReference>
<dbReference type="GO" id="GO:0008270">
    <property type="term" value="F:zinc ion binding"/>
    <property type="evidence" value="ECO:0007669"/>
    <property type="project" value="UniProtKB-UniRule"/>
</dbReference>
<dbReference type="GO" id="GO:0009228">
    <property type="term" value="P:thiamine biosynthetic process"/>
    <property type="evidence" value="ECO:0007669"/>
    <property type="project" value="UniProtKB-KW"/>
</dbReference>
<dbReference type="GO" id="GO:0009229">
    <property type="term" value="P:thiamine diphosphate biosynthetic process"/>
    <property type="evidence" value="ECO:0007669"/>
    <property type="project" value="UniProtKB-UniRule"/>
</dbReference>
<dbReference type="FunFam" id="3.20.20.540:FF:000001">
    <property type="entry name" value="Phosphomethylpyrimidine synthase"/>
    <property type="match status" value="1"/>
</dbReference>
<dbReference type="Gene3D" id="6.10.250.620">
    <property type="match status" value="1"/>
</dbReference>
<dbReference type="Gene3D" id="3.20.20.540">
    <property type="entry name" value="Radical SAM ThiC family, central domain"/>
    <property type="match status" value="1"/>
</dbReference>
<dbReference type="HAMAP" id="MF_00089">
    <property type="entry name" value="ThiC"/>
    <property type="match status" value="1"/>
</dbReference>
<dbReference type="InterPro" id="IPR037509">
    <property type="entry name" value="ThiC"/>
</dbReference>
<dbReference type="InterPro" id="IPR025747">
    <property type="entry name" value="ThiC-associated_dom"/>
</dbReference>
<dbReference type="InterPro" id="IPR038521">
    <property type="entry name" value="ThiC/Bza_core_dom"/>
</dbReference>
<dbReference type="InterPro" id="IPR002817">
    <property type="entry name" value="ThiC/BzaA/B"/>
</dbReference>
<dbReference type="NCBIfam" id="NF006763">
    <property type="entry name" value="PRK09284.1"/>
    <property type="match status" value="1"/>
</dbReference>
<dbReference type="NCBIfam" id="NF009895">
    <property type="entry name" value="PRK13352.1"/>
    <property type="match status" value="1"/>
</dbReference>
<dbReference type="NCBIfam" id="TIGR00190">
    <property type="entry name" value="thiC"/>
    <property type="match status" value="1"/>
</dbReference>
<dbReference type="PANTHER" id="PTHR30557:SF1">
    <property type="entry name" value="PHOSPHOMETHYLPYRIMIDINE SYNTHASE, CHLOROPLASTIC"/>
    <property type="match status" value="1"/>
</dbReference>
<dbReference type="PANTHER" id="PTHR30557">
    <property type="entry name" value="THIAMINE BIOSYNTHESIS PROTEIN THIC"/>
    <property type="match status" value="1"/>
</dbReference>
<dbReference type="Pfam" id="PF13667">
    <property type="entry name" value="ThiC-associated"/>
    <property type="match status" value="1"/>
</dbReference>
<dbReference type="Pfam" id="PF01964">
    <property type="entry name" value="ThiC_Rad_SAM"/>
    <property type="match status" value="1"/>
</dbReference>
<dbReference type="SFLD" id="SFLDF00407">
    <property type="entry name" value="phosphomethylpyrimidine_syntha"/>
    <property type="match status" value="1"/>
</dbReference>
<dbReference type="SFLD" id="SFLDG01114">
    <property type="entry name" value="phosphomethylpyrimidine_syntha"/>
    <property type="match status" value="1"/>
</dbReference>
<dbReference type="SFLD" id="SFLDS00113">
    <property type="entry name" value="Radical_SAM_Phosphomethylpyrim"/>
    <property type="match status" value="1"/>
</dbReference>
<accession>B5FQK9</accession>
<reference key="1">
    <citation type="journal article" date="2011" name="J. Bacteriol.">
        <title>Comparative genomics of 28 Salmonella enterica isolates: evidence for CRISPR-mediated adaptive sublineage evolution.</title>
        <authorList>
            <person name="Fricke W.F."/>
            <person name="Mammel M.K."/>
            <person name="McDermott P.F."/>
            <person name="Tartera C."/>
            <person name="White D.G."/>
            <person name="Leclerc J.E."/>
            <person name="Ravel J."/>
            <person name="Cebula T.A."/>
        </authorList>
    </citation>
    <scope>NUCLEOTIDE SEQUENCE [LARGE SCALE GENOMIC DNA]</scope>
    <source>
        <strain>CT_02021853</strain>
    </source>
</reference>
<comment type="function">
    <text evidence="1">Catalyzes the synthesis of the hydroxymethylpyrimidine phosphate (HMP-P) moiety of thiamine from aminoimidazole ribotide (AIR) in a radical S-adenosyl-L-methionine (SAM)-dependent reaction.</text>
</comment>
<comment type="catalytic activity">
    <reaction evidence="1">
        <text>5-amino-1-(5-phospho-beta-D-ribosyl)imidazole + S-adenosyl-L-methionine = 4-amino-2-methyl-5-(phosphooxymethyl)pyrimidine + CO + 5'-deoxyadenosine + formate + L-methionine + 3 H(+)</text>
        <dbReference type="Rhea" id="RHEA:24840"/>
        <dbReference type="ChEBI" id="CHEBI:15378"/>
        <dbReference type="ChEBI" id="CHEBI:15740"/>
        <dbReference type="ChEBI" id="CHEBI:17245"/>
        <dbReference type="ChEBI" id="CHEBI:17319"/>
        <dbReference type="ChEBI" id="CHEBI:57844"/>
        <dbReference type="ChEBI" id="CHEBI:58354"/>
        <dbReference type="ChEBI" id="CHEBI:59789"/>
        <dbReference type="ChEBI" id="CHEBI:137981"/>
        <dbReference type="EC" id="4.1.99.17"/>
    </reaction>
</comment>
<comment type="cofactor">
    <cofactor evidence="1">
        <name>[4Fe-4S] cluster</name>
        <dbReference type="ChEBI" id="CHEBI:49883"/>
    </cofactor>
    <text evidence="1">Binds 1 [4Fe-4S] cluster per subunit. The cluster is coordinated with 3 cysteines and an exchangeable S-adenosyl-L-methionine.</text>
</comment>
<comment type="pathway">
    <text evidence="1">Cofactor biosynthesis; thiamine diphosphate biosynthesis.</text>
</comment>
<comment type="subunit">
    <text evidence="1">Homodimer.</text>
</comment>
<comment type="similarity">
    <text evidence="1">Belongs to the ThiC family.</text>
</comment>
<evidence type="ECO:0000255" key="1">
    <source>
        <dbReference type="HAMAP-Rule" id="MF_00089"/>
    </source>
</evidence>
<sequence>MSTTTLTRREQRAKAQHFIDTLEGTAFPNSKRIYVTGSQHDIRVPMREIQLSPTLIGGSKDNPQFEENEAVPVYDTSGPYGDPEVAINVQQGLAKLRQPWIDARNDSEELDDRSSAYTRERLADDGLDDLRFTGLLTPKRAKAGKRVTQLHYARQGIVTPEMEFIAIRENMGRERIRSEVLRHQHPGMNFGARLPENITPEFVRDEVAAGRAIIPANINHPESEPMIIGRNFLVKVNANIGNSAVTSSIEEEVEKLVWSTRWGADTVMDLSTGRYIHETREWILRNSPVPIGTVPIYQALEKVNGIAEDLTWEAFRDTLLEQAEQGVDYFTIHAGVLLRYVPMTAKRLTGIVSRGGSIMAKWCLSHHKENFLFEHFREICEICAAYDVSLSLGDGLRPGSIQDANDEAQFSELHTLGELTKIAWEYDVQVMIEGPGHVPMHMIQRNMTEELESCHEAPFYTLGPLTTDIAPGYDHFTSGIGAAMIGWFGCAMLCYVTPKEHLGLPNKEDVKQGLITYKIAAHAADLAKGHPGAQIRDNAMSKARFEFRWEDQFNLALDPFTARAYHDETLPQESGKVAHFCSMCGPKFCSMKISQGVRDYAAAQAIEVGMADMSENFRAKGGEIYLKREEA</sequence>